<evidence type="ECO:0000255" key="1">
    <source>
        <dbReference type="HAMAP-Rule" id="MF_00150"/>
    </source>
</evidence>
<feature type="chain" id="PRO_1000011073" description="N-acetyl-gamma-glutamyl-phosphate reductase">
    <location>
        <begin position="1"/>
        <end position="352"/>
    </location>
</feature>
<feature type="active site" evidence="1">
    <location>
        <position position="155"/>
    </location>
</feature>
<gene>
    <name evidence="1" type="primary">argC</name>
    <name type="ordered locus">Synpcc7942_1433</name>
</gene>
<name>ARGC_SYNE7</name>
<sequence length="352" mass="38119">MHESSRLPVGIIGASGYGGVQLVRLLQDHPQLEVAYLGGDRSAGKEFAELYPHLGPHLNLTIEAIDVDRIAERCAAVFLSLPNGLAYDLAPALLERGCKVLDLSADYRFHDLKTYALWYGGDRQDAAVAHTAIYGLPELYRNRIANAQLIGCPGCYPTASLLALAPALKQGLIDPDTIVIDAKSGTSGAGRQAKTNALLAEAGNSVGAYGVARHRHTPEIEQICSDLSGHEVLLQFTPHLMPMVRGIHATIYAKLRDPNLTTEDCLTVYQAFYRNAPMVKVLTHGTYPQTKWAAGTNLCYLGLEVDARTGRIVLLSAIDNLIKGQAGQAIQCLNLMQGWEEGLGLPTLCYYP</sequence>
<accession>Q31NA6</accession>
<keyword id="KW-0028">Amino-acid biosynthesis</keyword>
<keyword id="KW-0055">Arginine biosynthesis</keyword>
<keyword id="KW-0963">Cytoplasm</keyword>
<keyword id="KW-0521">NADP</keyword>
<keyword id="KW-0560">Oxidoreductase</keyword>
<keyword id="KW-1185">Reference proteome</keyword>
<comment type="function">
    <text evidence="1">Catalyzes the NADPH-dependent reduction of N-acetyl-5-glutamyl phosphate to yield N-acetyl-L-glutamate 5-semialdehyde.</text>
</comment>
<comment type="catalytic activity">
    <reaction evidence="1">
        <text>N-acetyl-L-glutamate 5-semialdehyde + phosphate + NADP(+) = N-acetyl-L-glutamyl 5-phosphate + NADPH + H(+)</text>
        <dbReference type="Rhea" id="RHEA:21588"/>
        <dbReference type="ChEBI" id="CHEBI:15378"/>
        <dbReference type="ChEBI" id="CHEBI:29123"/>
        <dbReference type="ChEBI" id="CHEBI:43474"/>
        <dbReference type="ChEBI" id="CHEBI:57783"/>
        <dbReference type="ChEBI" id="CHEBI:57936"/>
        <dbReference type="ChEBI" id="CHEBI:58349"/>
        <dbReference type="EC" id="1.2.1.38"/>
    </reaction>
</comment>
<comment type="pathway">
    <text evidence="1">Amino-acid biosynthesis; L-arginine biosynthesis; N(2)-acetyl-L-ornithine from L-glutamate: step 3/4.</text>
</comment>
<comment type="subcellular location">
    <subcellularLocation>
        <location evidence="1">Cytoplasm</location>
    </subcellularLocation>
</comment>
<comment type="similarity">
    <text evidence="1">Belongs to the NAGSA dehydrogenase family. Type 1 subfamily.</text>
</comment>
<organism>
    <name type="scientific">Synechococcus elongatus (strain ATCC 33912 / PCC 7942 / FACHB-805)</name>
    <name type="common">Anacystis nidulans R2</name>
    <dbReference type="NCBI Taxonomy" id="1140"/>
    <lineage>
        <taxon>Bacteria</taxon>
        <taxon>Bacillati</taxon>
        <taxon>Cyanobacteriota</taxon>
        <taxon>Cyanophyceae</taxon>
        <taxon>Synechococcales</taxon>
        <taxon>Synechococcaceae</taxon>
        <taxon>Synechococcus</taxon>
    </lineage>
</organism>
<reference key="1">
    <citation type="submission" date="2005-08" db="EMBL/GenBank/DDBJ databases">
        <title>Complete sequence of chromosome 1 of Synechococcus elongatus PCC 7942.</title>
        <authorList>
            <consortium name="US DOE Joint Genome Institute"/>
            <person name="Copeland A."/>
            <person name="Lucas S."/>
            <person name="Lapidus A."/>
            <person name="Barry K."/>
            <person name="Detter J.C."/>
            <person name="Glavina T."/>
            <person name="Hammon N."/>
            <person name="Israni S."/>
            <person name="Pitluck S."/>
            <person name="Schmutz J."/>
            <person name="Larimer F."/>
            <person name="Land M."/>
            <person name="Kyrpides N."/>
            <person name="Lykidis A."/>
            <person name="Golden S."/>
            <person name="Richardson P."/>
        </authorList>
    </citation>
    <scope>NUCLEOTIDE SEQUENCE [LARGE SCALE GENOMIC DNA]</scope>
    <source>
        <strain>ATCC 33912 / PCC 7942 / FACHB-805</strain>
    </source>
</reference>
<proteinExistence type="inferred from homology"/>
<protein>
    <recommendedName>
        <fullName evidence="1">N-acetyl-gamma-glutamyl-phosphate reductase</fullName>
        <shortName evidence="1">AGPR</shortName>
        <ecNumber evidence="1">1.2.1.38</ecNumber>
    </recommendedName>
    <alternativeName>
        <fullName evidence="1">N-acetyl-glutamate semialdehyde dehydrogenase</fullName>
        <shortName evidence="1">NAGSA dehydrogenase</shortName>
    </alternativeName>
</protein>
<dbReference type="EC" id="1.2.1.38" evidence="1"/>
<dbReference type="EMBL" id="CP000100">
    <property type="protein sequence ID" value="ABB57463.1"/>
    <property type="molecule type" value="Genomic_DNA"/>
</dbReference>
<dbReference type="RefSeq" id="WP_011242437.1">
    <property type="nucleotide sequence ID" value="NZ_JACJTX010000004.1"/>
</dbReference>
<dbReference type="SMR" id="Q31NA6"/>
<dbReference type="STRING" id="1140.Synpcc7942_1433"/>
<dbReference type="PaxDb" id="1140-Synpcc7942_1433"/>
<dbReference type="GeneID" id="72430296"/>
<dbReference type="KEGG" id="syf:Synpcc7942_1433"/>
<dbReference type="eggNOG" id="COG0002">
    <property type="taxonomic scope" value="Bacteria"/>
</dbReference>
<dbReference type="HOGENOM" id="CLU_006384_0_1_3"/>
<dbReference type="OrthoDB" id="9801289at2"/>
<dbReference type="BioCyc" id="SYNEL:SYNPCC7942_1433-MONOMER"/>
<dbReference type="UniPathway" id="UPA00068">
    <property type="reaction ID" value="UER00108"/>
</dbReference>
<dbReference type="Proteomes" id="UP000889800">
    <property type="component" value="Chromosome"/>
</dbReference>
<dbReference type="GO" id="GO:0005737">
    <property type="term" value="C:cytoplasm"/>
    <property type="evidence" value="ECO:0007669"/>
    <property type="project" value="UniProtKB-SubCell"/>
</dbReference>
<dbReference type="GO" id="GO:0003942">
    <property type="term" value="F:N-acetyl-gamma-glutamyl-phosphate reductase activity"/>
    <property type="evidence" value="ECO:0007669"/>
    <property type="project" value="UniProtKB-UniRule"/>
</dbReference>
<dbReference type="GO" id="GO:0051287">
    <property type="term" value="F:NAD binding"/>
    <property type="evidence" value="ECO:0007669"/>
    <property type="project" value="InterPro"/>
</dbReference>
<dbReference type="GO" id="GO:0070401">
    <property type="term" value="F:NADP+ binding"/>
    <property type="evidence" value="ECO:0007669"/>
    <property type="project" value="InterPro"/>
</dbReference>
<dbReference type="GO" id="GO:0006526">
    <property type="term" value="P:L-arginine biosynthetic process"/>
    <property type="evidence" value="ECO:0007669"/>
    <property type="project" value="UniProtKB-UniRule"/>
</dbReference>
<dbReference type="CDD" id="cd23934">
    <property type="entry name" value="AGPR_1_C"/>
    <property type="match status" value="1"/>
</dbReference>
<dbReference type="CDD" id="cd17895">
    <property type="entry name" value="AGPR_1_N"/>
    <property type="match status" value="1"/>
</dbReference>
<dbReference type="FunFam" id="3.30.360.10:FF:000014">
    <property type="entry name" value="N-acetyl-gamma-glutamyl-phosphate reductase"/>
    <property type="match status" value="1"/>
</dbReference>
<dbReference type="Gene3D" id="3.30.360.10">
    <property type="entry name" value="Dihydrodipicolinate Reductase, domain 2"/>
    <property type="match status" value="1"/>
</dbReference>
<dbReference type="Gene3D" id="3.40.50.720">
    <property type="entry name" value="NAD(P)-binding Rossmann-like Domain"/>
    <property type="match status" value="1"/>
</dbReference>
<dbReference type="HAMAP" id="MF_00150">
    <property type="entry name" value="ArgC_type1"/>
    <property type="match status" value="1"/>
</dbReference>
<dbReference type="InterPro" id="IPR023013">
    <property type="entry name" value="AGPR_AS"/>
</dbReference>
<dbReference type="InterPro" id="IPR000706">
    <property type="entry name" value="AGPR_type-1"/>
</dbReference>
<dbReference type="InterPro" id="IPR036291">
    <property type="entry name" value="NAD(P)-bd_dom_sf"/>
</dbReference>
<dbReference type="InterPro" id="IPR050085">
    <property type="entry name" value="NAGSA_dehydrogenase"/>
</dbReference>
<dbReference type="InterPro" id="IPR000534">
    <property type="entry name" value="Semialdehyde_DH_NAD-bd"/>
</dbReference>
<dbReference type="NCBIfam" id="TIGR01850">
    <property type="entry name" value="argC"/>
    <property type="match status" value="1"/>
</dbReference>
<dbReference type="PANTHER" id="PTHR32338:SF10">
    <property type="entry name" value="N-ACETYL-GAMMA-GLUTAMYL-PHOSPHATE REDUCTASE, CHLOROPLASTIC-RELATED"/>
    <property type="match status" value="1"/>
</dbReference>
<dbReference type="PANTHER" id="PTHR32338">
    <property type="entry name" value="N-ACETYL-GAMMA-GLUTAMYL-PHOSPHATE REDUCTASE, CHLOROPLASTIC-RELATED-RELATED"/>
    <property type="match status" value="1"/>
</dbReference>
<dbReference type="Pfam" id="PF01118">
    <property type="entry name" value="Semialdhyde_dh"/>
    <property type="match status" value="1"/>
</dbReference>
<dbReference type="Pfam" id="PF22698">
    <property type="entry name" value="Semialdhyde_dhC_1"/>
    <property type="match status" value="1"/>
</dbReference>
<dbReference type="SMART" id="SM00859">
    <property type="entry name" value="Semialdhyde_dh"/>
    <property type="match status" value="1"/>
</dbReference>
<dbReference type="SUPFAM" id="SSF55347">
    <property type="entry name" value="Glyceraldehyde-3-phosphate dehydrogenase-like, C-terminal domain"/>
    <property type="match status" value="1"/>
</dbReference>
<dbReference type="SUPFAM" id="SSF51735">
    <property type="entry name" value="NAD(P)-binding Rossmann-fold domains"/>
    <property type="match status" value="1"/>
</dbReference>
<dbReference type="PROSITE" id="PS01224">
    <property type="entry name" value="ARGC"/>
    <property type="match status" value="1"/>
</dbReference>